<comment type="function">
    <text evidence="1">Recruits CKI-epsilon to the beta-catenin degradation complex that consists of AXN1 or AXN2 and GSK3-beta and allows efficient phosphorylation of beta-catenin, thereby inhibiting beta-catenin/Tcf signals.</text>
</comment>
<comment type="subunit">
    <text evidence="1">Interacts with AXN1, AXN2 and CSNK1E/CKI-epsilon.</text>
</comment>
<comment type="alternative products">
    <event type="alternative splicing"/>
    <isoform>
        <id>Q9Y2G4-2</id>
        <name>1</name>
        <sequence type="displayed"/>
    </isoform>
    <isoform>
        <id>Q9Y2G4-1</id>
        <name>2</name>
        <sequence type="described" ref="VSP_000270"/>
    </isoform>
    <isoform>
        <id>Q9Y2G4-3</id>
        <name>3</name>
        <sequence type="described" ref="VSP_031591"/>
    </isoform>
    <isoform>
        <id>Q9Y2G4-4</id>
        <name>4</name>
        <sequence type="described" ref="VSP_043189 VSP_043190 VSP_031591"/>
    </isoform>
</comment>
<comment type="sequence caution" evidence="10">
    <conflict type="erroneous initiation">
        <sequence resource="EMBL-CDS" id="BAA76801"/>
    </conflict>
    <text>Extended N-terminus.</text>
</comment>
<name>ANKR6_HUMAN</name>
<sequence>MSQQDAVAALSERLLVAAYKGQTENVVQLINKGARVAVTKHGRTPLHLAANKGHLPVVQILLKAGCDLDVQDDGDQTALHRATVVGNTEIIAALIHEGCALDRQDKDGNTALHEASWHGFSQSAKLLIKAGANVLAKNKAGNTALHLACQNSHSQSTRVLLLAGSRADLKNNAGDTCLHVAARYNHLSIIRLLLTAFCSVHEKNQAGDTALHVAAALNHKKVAKILLEAGADTTIVNNAGQTPLETARYHNNPEVALLLTKAPQVLRFSRGRSLRKKRERLKEERRAQSVPRDEVAQSKGSVSAGDTPSSEQAVARKEEAREEFLSASPEPRAKDDRRRKSRPKVSAFSDPTPPADQQPGHQKNLHAHNHPKKRNRHRCSSPPPPHEFRAYQLYTLYRGKDGKVMQAPINGCRCEPLINKLENQLEATVEEIKAELGSVQDKMNTKLGQMENKTQHQMRVLDKLMVERLSAERTECLNRLQQHSDTEKHEGEKRQISLVDELKTWCMLKIQNLEQKLSGDSRACRAKSTPSTCESSTGVDQLVVTAGPAAASDSSPPVVRPKEKALNSTATQRLQQELSSSDCTGSRLRNVKVQTALLPMNEAARSDQQAGPCVNRGTQTKKSGKSGPTRHRAQQPAASSTCGQPPPATGSEQTGPHIRDTSQALELTQYFFEAVSTQMEKWYERKIEEARSQANQKAQQDKATLKEHIKSLEEELAKLRTRVQKEN</sequence>
<evidence type="ECO:0000250" key="1"/>
<evidence type="ECO:0000255" key="2"/>
<evidence type="ECO:0000256" key="3">
    <source>
        <dbReference type="SAM" id="MobiDB-lite"/>
    </source>
</evidence>
<evidence type="ECO:0000269" key="4">
    <source>
    </source>
</evidence>
<evidence type="ECO:0000269" key="5">
    <source>
    </source>
</evidence>
<evidence type="ECO:0000269" key="6">
    <source>
    </source>
</evidence>
<evidence type="ECO:0000303" key="7">
    <source>
    </source>
</evidence>
<evidence type="ECO:0000303" key="8">
    <source>
    </source>
</evidence>
<evidence type="ECO:0000303" key="9">
    <source>
    </source>
</evidence>
<evidence type="ECO:0000305" key="10"/>
<keyword id="KW-0025">Alternative splicing</keyword>
<keyword id="KW-0040">ANK repeat</keyword>
<keyword id="KW-0175">Coiled coil</keyword>
<keyword id="KW-1267">Proteomics identification</keyword>
<keyword id="KW-1185">Reference proteome</keyword>
<keyword id="KW-0677">Repeat</keyword>
<gene>
    <name type="primary">ANKRD6</name>
    <name type="synonym">KIAA0957</name>
</gene>
<feature type="chain" id="PRO_0000066901" description="Ankyrin repeat domain-containing protein 6">
    <location>
        <begin position="1"/>
        <end position="727"/>
    </location>
</feature>
<feature type="repeat" description="ANK 1">
    <location>
        <begin position="9"/>
        <end position="38"/>
    </location>
</feature>
<feature type="repeat" description="ANK 2">
    <location>
        <begin position="41"/>
        <end position="70"/>
    </location>
</feature>
<feature type="repeat" description="ANK 3">
    <location>
        <begin position="74"/>
        <end position="103"/>
    </location>
</feature>
<feature type="repeat" description="ANK 4">
    <location>
        <begin position="107"/>
        <end position="136"/>
    </location>
</feature>
<feature type="repeat" description="ANK 5">
    <location>
        <begin position="140"/>
        <end position="169"/>
    </location>
</feature>
<feature type="repeat" description="ANK 6">
    <location>
        <begin position="173"/>
        <end position="202"/>
    </location>
</feature>
<feature type="repeat" description="ANK 7">
    <location>
        <begin position="206"/>
        <end position="235"/>
    </location>
</feature>
<feature type="repeat" description="ANK 8">
    <location>
        <begin position="239"/>
        <end position="268"/>
    </location>
</feature>
<feature type="region of interest" description="Disordered" evidence="3">
    <location>
        <begin position="277"/>
        <end position="386"/>
    </location>
</feature>
<feature type="region of interest" description="Disordered" evidence="3">
    <location>
        <begin position="548"/>
        <end position="586"/>
    </location>
</feature>
<feature type="region of interest" description="Disordered" evidence="3">
    <location>
        <begin position="601"/>
        <end position="657"/>
    </location>
</feature>
<feature type="coiled-coil region" evidence="2">
    <location>
        <begin position="417"/>
        <end position="446"/>
    </location>
</feature>
<feature type="coiled-coil region" evidence="2">
    <location>
        <begin position="682"/>
        <end position="727"/>
    </location>
</feature>
<feature type="compositionally biased region" description="Basic and acidic residues" evidence="3">
    <location>
        <begin position="280"/>
        <end position="296"/>
    </location>
</feature>
<feature type="compositionally biased region" description="Polar residues" evidence="3">
    <location>
        <begin position="298"/>
        <end position="312"/>
    </location>
</feature>
<feature type="compositionally biased region" description="Basic and acidic residues" evidence="3">
    <location>
        <begin position="314"/>
        <end position="324"/>
    </location>
</feature>
<feature type="compositionally biased region" description="Basic residues" evidence="3">
    <location>
        <begin position="363"/>
        <end position="379"/>
    </location>
</feature>
<feature type="compositionally biased region" description="Low complexity" evidence="3">
    <location>
        <begin position="548"/>
        <end position="557"/>
    </location>
</feature>
<feature type="compositionally biased region" description="Polar residues" evidence="3">
    <location>
        <begin position="566"/>
        <end position="584"/>
    </location>
</feature>
<feature type="compositionally biased region" description="Basic residues" evidence="3">
    <location>
        <begin position="622"/>
        <end position="633"/>
    </location>
</feature>
<feature type="splice variant" id="VSP_043189" description="In isoform 4." evidence="8">
    <location>
        <begin position="106"/>
        <end position="138"/>
    </location>
</feature>
<feature type="splice variant" id="VSP_043190" description="In isoform 4." evidence="8">
    <location>
        <begin position="239"/>
        <end position="264"/>
    </location>
</feature>
<feature type="splice variant" id="VSP_000270" description="In isoform 2." evidence="7">
    <location>
        <begin position="265"/>
        <end position="299"/>
    </location>
</feature>
<feature type="splice variant" id="VSP_031591" description="In isoform 3 and isoform 4." evidence="8 9">
    <location>
        <begin position="534"/>
        <end position="538"/>
    </location>
</feature>
<feature type="sequence variant" id="VAR_039114" description="In dbSNP:rs16881983.">
    <original>Q</original>
    <variation>E</variation>
    <location>
        <position position="122"/>
    </location>
</feature>
<feature type="sequence variant" id="VAR_039115" description="In dbSNP:rs3748085." evidence="4 5 6">
    <original>I</original>
    <variation>V</variation>
    <location>
        <position position="128"/>
    </location>
</feature>
<feature type="sequence variant" id="VAR_039116" description="In dbSNP:rs2273238.">
    <original>T</original>
    <variation>M</variation>
    <location>
        <position position="233"/>
    </location>
</feature>
<feature type="sequence variant" id="VAR_039117" description="In dbSNP:rs9362667.">
    <original>T</original>
    <variation>A</variation>
    <location>
        <position position="545"/>
    </location>
</feature>
<feature type="sequence variant" id="VAR_055506" description="In dbSNP:rs9362667.">
    <original>A</original>
    <variation>T</variation>
    <location>
        <position position="550"/>
    </location>
</feature>
<feature type="sequence conflict" description="In Ref. 5; CAB55968." evidence="10" ref="5">
    <original>N</original>
    <variation>I</variation>
    <location>
        <position position="87"/>
    </location>
</feature>
<accession>Q9Y2G4</accession>
<accession>B3KUC3</accession>
<accession>Q5JUJ4</accession>
<accession>Q5JUJ5</accession>
<accession>Q8IUQ8</accession>
<accession>Q9NU24</accession>
<accession>Q9UFQ9</accession>
<protein>
    <recommendedName>
        <fullName>Ankyrin repeat domain-containing protein 6</fullName>
    </recommendedName>
    <alternativeName>
        <fullName>Diversin</fullName>
    </alternativeName>
</protein>
<reference key="1">
    <citation type="journal article" date="1999" name="DNA Res.">
        <title>Prediction of the coding sequences of unidentified human genes. XIII. The complete sequences of 100 new cDNA clones from brain which code for large proteins in vitro.</title>
        <authorList>
            <person name="Nagase T."/>
            <person name="Ishikawa K."/>
            <person name="Suyama M."/>
            <person name="Kikuno R."/>
            <person name="Hirosawa M."/>
            <person name="Miyajima N."/>
            <person name="Tanaka A."/>
            <person name="Kotani H."/>
            <person name="Nomura N."/>
            <person name="Ohara O."/>
        </authorList>
    </citation>
    <scope>NUCLEOTIDE SEQUENCE [LARGE SCALE MRNA] (ISOFORM 2)</scope>
    <scope>VARIANT VAL-128</scope>
    <source>
        <tissue>Brain</tissue>
    </source>
</reference>
<reference key="2">
    <citation type="journal article" date="2004" name="Nat. Genet.">
        <title>Complete sequencing and characterization of 21,243 full-length human cDNAs.</title>
        <authorList>
            <person name="Ota T."/>
            <person name="Suzuki Y."/>
            <person name="Nishikawa T."/>
            <person name="Otsuki T."/>
            <person name="Sugiyama T."/>
            <person name="Irie R."/>
            <person name="Wakamatsu A."/>
            <person name="Hayashi K."/>
            <person name="Sato H."/>
            <person name="Nagai K."/>
            <person name="Kimura K."/>
            <person name="Makita H."/>
            <person name="Sekine M."/>
            <person name="Obayashi M."/>
            <person name="Nishi T."/>
            <person name="Shibahara T."/>
            <person name="Tanaka T."/>
            <person name="Ishii S."/>
            <person name="Yamamoto J."/>
            <person name="Saito K."/>
            <person name="Kawai Y."/>
            <person name="Isono Y."/>
            <person name="Nakamura Y."/>
            <person name="Nagahari K."/>
            <person name="Murakami K."/>
            <person name="Yasuda T."/>
            <person name="Iwayanagi T."/>
            <person name="Wagatsuma M."/>
            <person name="Shiratori A."/>
            <person name="Sudo H."/>
            <person name="Hosoiri T."/>
            <person name="Kaku Y."/>
            <person name="Kodaira H."/>
            <person name="Kondo H."/>
            <person name="Sugawara M."/>
            <person name="Takahashi M."/>
            <person name="Kanda K."/>
            <person name="Yokoi T."/>
            <person name="Furuya T."/>
            <person name="Kikkawa E."/>
            <person name="Omura Y."/>
            <person name="Abe K."/>
            <person name="Kamihara K."/>
            <person name="Katsuta N."/>
            <person name="Sato K."/>
            <person name="Tanikawa M."/>
            <person name="Yamazaki M."/>
            <person name="Ninomiya K."/>
            <person name="Ishibashi T."/>
            <person name="Yamashita H."/>
            <person name="Murakawa K."/>
            <person name="Fujimori K."/>
            <person name="Tanai H."/>
            <person name="Kimata M."/>
            <person name="Watanabe M."/>
            <person name="Hiraoka S."/>
            <person name="Chiba Y."/>
            <person name="Ishida S."/>
            <person name="Ono Y."/>
            <person name="Takiguchi S."/>
            <person name="Watanabe S."/>
            <person name="Yosida M."/>
            <person name="Hotuta T."/>
            <person name="Kusano J."/>
            <person name="Kanehori K."/>
            <person name="Takahashi-Fujii A."/>
            <person name="Hara H."/>
            <person name="Tanase T.-O."/>
            <person name="Nomura Y."/>
            <person name="Togiya S."/>
            <person name="Komai F."/>
            <person name="Hara R."/>
            <person name="Takeuchi K."/>
            <person name="Arita M."/>
            <person name="Imose N."/>
            <person name="Musashino K."/>
            <person name="Yuuki H."/>
            <person name="Oshima A."/>
            <person name="Sasaki N."/>
            <person name="Aotsuka S."/>
            <person name="Yoshikawa Y."/>
            <person name="Matsunawa H."/>
            <person name="Ichihara T."/>
            <person name="Shiohata N."/>
            <person name="Sano S."/>
            <person name="Moriya S."/>
            <person name="Momiyama H."/>
            <person name="Satoh N."/>
            <person name="Takami S."/>
            <person name="Terashima Y."/>
            <person name="Suzuki O."/>
            <person name="Nakagawa S."/>
            <person name="Senoh A."/>
            <person name="Mizoguchi H."/>
            <person name="Goto Y."/>
            <person name="Shimizu F."/>
            <person name="Wakebe H."/>
            <person name="Hishigaki H."/>
            <person name="Watanabe T."/>
            <person name="Sugiyama A."/>
            <person name="Takemoto M."/>
            <person name="Kawakami B."/>
            <person name="Yamazaki M."/>
            <person name="Watanabe K."/>
            <person name="Kumagai A."/>
            <person name="Itakura S."/>
            <person name="Fukuzumi Y."/>
            <person name="Fujimori Y."/>
            <person name="Komiyama M."/>
            <person name="Tashiro H."/>
            <person name="Tanigami A."/>
            <person name="Fujiwara T."/>
            <person name="Ono T."/>
            <person name="Yamada K."/>
            <person name="Fujii Y."/>
            <person name="Ozaki K."/>
            <person name="Hirao M."/>
            <person name="Ohmori Y."/>
            <person name="Kawabata A."/>
            <person name="Hikiji T."/>
            <person name="Kobatake N."/>
            <person name="Inagaki H."/>
            <person name="Ikema Y."/>
            <person name="Okamoto S."/>
            <person name="Okitani R."/>
            <person name="Kawakami T."/>
            <person name="Noguchi S."/>
            <person name="Itoh T."/>
            <person name="Shigeta K."/>
            <person name="Senba T."/>
            <person name="Matsumura K."/>
            <person name="Nakajima Y."/>
            <person name="Mizuno T."/>
            <person name="Morinaga M."/>
            <person name="Sasaki M."/>
            <person name="Togashi T."/>
            <person name="Oyama M."/>
            <person name="Hata H."/>
            <person name="Watanabe M."/>
            <person name="Komatsu T."/>
            <person name="Mizushima-Sugano J."/>
            <person name="Satoh T."/>
            <person name="Shirai Y."/>
            <person name="Takahashi Y."/>
            <person name="Nakagawa K."/>
            <person name="Okumura K."/>
            <person name="Nagase T."/>
            <person name="Nomura N."/>
            <person name="Kikuchi H."/>
            <person name="Masuho Y."/>
            <person name="Yamashita R."/>
            <person name="Nakai K."/>
            <person name="Yada T."/>
            <person name="Nakamura Y."/>
            <person name="Ohara O."/>
            <person name="Isogai T."/>
            <person name="Sugano S."/>
        </authorList>
    </citation>
    <scope>NUCLEOTIDE SEQUENCE [LARGE SCALE MRNA] (ISOFORM 4)</scope>
</reference>
<reference key="3">
    <citation type="journal article" date="2003" name="Nature">
        <title>The DNA sequence and analysis of human chromosome 6.</title>
        <authorList>
            <person name="Mungall A.J."/>
            <person name="Palmer S.A."/>
            <person name="Sims S.K."/>
            <person name="Edwards C.A."/>
            <person name="Ashurst J.L."/>
            <person name="Wilming L."/>
            <person name="Jones M.C."/>
            <person name="Horton R."/>
            <person name="Hunt S.E."/>
            <person name="Scott C.E."/>
            <person name="Gilbert J.G.R."/>
            <person name="Clamp M.E."/>
            <person name="Bethel G."/>
            <person name="Milne S."/>
            <person name="Ainscough R."/>
            <person name="Almeida J.P."/>
            <person name="Ambrose K.D."/>
            <person name="Andrews T.D."/>
            <person name="Ashwell R.I.S."/>
            <person name="Babbage A.K."/>
            <person name="Bagguley C.L."/>
            <person name="Bailey J."/>
            <person name="Banerjee R."/>
            <person name="Barker D.J."/>
            <person name="Barlow K.F."/>
            <person name="Bates K."/>
            <person name="Beare D.M."/>
            <person name="Beasley H."/>
            <person name="Beasley O."/>
            <person name="Bird C.P."/>
            <person name="Blakey S.E."/>
            <person name="Bray-Allen S."/>
            <person name="Brook J."/>
            <person name="Brown A.J."/>
            <person name="Brown J.Y."/>
            <person name="Burford D.C."/>
            <person name="Burrill W."/>
            <person name="Burton J."/>
            <person name="Carder C."/>
            <person name="Carter N.P."/>
            <person name="Chapman J.C."/>
            <person name="Clark S.Y."/>
            <person name="Clark G."/>
            <person name="Clee C.M."/>
            <person name="Clegg S."/>
            <person name="Cobley V."/>
            <person name="Collier R.E."/>
            <person name="Collins J.E."/>
            <person name="Colman L.K."/>
            <person name="Corby N.R."/>
            <person name="Coville G.J."/>
            <person name="Culley K.M."/>
            <person name="Dhami P."/>
            <person name="Davies J."/>
            <person name="Dunn M."/>
            <person name="Earthrowl M.E."/>
            <person name="Ellington A.E."/>
            <person name="Evans K.A."/>
            <person name="Faulkner L."/>
            <person name="Francis M.D."/>
            <person name="Frankish A."/>
            <person name="Frankland J."/>
            <person name="French L."/>
            <person name="Garner P."/>
            <person name="Garnett J."/>
            <person name="Ghori M.J."/>
            <person name="Gilby L.M."/>
            <person name="Gillson C.J."/>
            <person name="Glithero R.J."/>
            <person name="Grafham D.V."/>
            <person name="Grant M."/>
            <person name="Gribble S."/>
            <person name="Griffiths C."/>
            <person name="Griffiths M.N.D."/>
            <person name="Hall R."/>
            <person name="Halls K.S."/>
            <person name="Hammond S."/>
            <person name="Harley J.L."/>
            <person name="Hart E.A."/>
            <person name="Heath P.D."/>
            <person name="Heathcott R."/>
            <person name="Holmes S.J."/>
            <person name="Howden P.J."/>
            <person name="Howe K.L."/>
            <person name="Howell G.R."/>
            <person name="Huckle E."/>
            <person name="Humphray S.J."/>
            <person name="Humphries M.D."/>
            <person name="Hunt A.R."/>
            <person name="Johnson C.M."/>
            <person name="Joy A.A."/>
            <person name="Kay M."/>
            <person name="Keenan S.J."/>
            <person name="Kimberley A.M."/>
            <person name="King A."/>
            <person name="Laird G.K."/>
            <person name="Langford C."/>
            <person name="Lawlor S."/>
            <person name="Leongamornlert D.A."/>
            <person name="Leversha M."/>
            <person name="Lloyd C.R."/>
            <person name="Lloyd D.M."/>
            <person name="Loveland J.E."/>
            <person name="Lovell J."/>
            <person name="Martin S."/>
            <person name="Mashreghi-Mohammadi M."/>
            <person name="Maslen G.L."/>
            <person name="Matthews L."/>
            <person name="McCann O.T."/>
            <person name="McLaren S.J."/>
            <person name="McLay K."/>
            <person name="McMurray A."/>
            <person name="Moore M.J.F."/>
            <person name="Mullikin J.C."/>
            <person name="Niblett D."/>
            <person name="Nickerson T."/>
            <person name="Novik K.L."/>
            <person name="Oliver K."/>
            <person name="Overton-Larty E.K."/>
            <person name="Parker A."/>
            <person name="Patel R."/>
            <person name="Pearce A.V."/>
            <person name="Peck A.I."/>
            <person name="Phillimore B.J.C.T."/>
            <person name="Phillips S."/>
            <person name="Plumb R.W."/>
            <person name="Porter K.M."/>
            <person name="Ramsey Y."/>
            <person name="Ranby S.A."/>
            <person name="Rice C.M."/>
            <person name="Ross M.T."/>
            <person name="Searle S.M."/>
            <person name="Sehra H.K."/>
            <person name="Sheridan E."/>
            <person name="Skuce C.D."/>
            <person name="Smith S."/>
            <person name="Smith M."/>
            <person name="Spraggon L."/>
            <person name="Squares S.L."/>
            <person name="Steward C.A."/>
            <person name="Sycamore N."/>
            <person name="Tamlyn-Hall G."/>
            <person name="Tester J."/>
            <person name="Theaker A.J."/>
            <person name="Thomas D.W."/>
            <person name="Thorpe A."/>
            <person name="Tracey A."/>
            <person name="Tromans A."/>
            <person name="Tubby B."/>
            <person name="Wall M."/>
            <person name="Wallis J.M."/>
            <person name="West A.P."/>
            <person name="White S.S."/>
            <person name="Whitehead S.L."/>
            <person name="Whittaker H."/>
            <person name="Wild A."/>
            <person name="Willey D.J."/>
            <person name="Wilmer T.E."/>
            <person name="Wood J.M."/>
            <person name="Wray P.W."/>
            <person name="Wyatt J.C."/>
            <person name="Young L."/>
            <person name="Younger R.M."/>
            <person name="Bentley D.R."/>
            <person name="Coulson A."/>
            <person name="Durbin R.M."/>
            <person name="Hubbard T."/>
            <person name="Sulston J.E."/>
            <person name="Dunham I."/>
            <person name="Rogers J."/>
            <person name="Beck S."/>
        </authorList>
    </citation>
    <scope>NUCLEOTIDE SEQUENCE [LARGE SCALE GENOMIC DNA]</scope>
</reference>
<reference key="4">
    <citation type="journal article" date="2004" name="Genome Res.">
        <title>The status, quality, and expansion of the NIH full-length cDNA project: the Mammalian Gene Collection (MGC).</title>
        <authorList>
            <consortium name="The MGC Project Team"/>
        </authorList>
    </citation>
    <scope>NUCLEOTIDE SEQUENCE [LARGE SCALE MRNA] (ISOFORM 3)</scope>
    <scope>VARIANT VAL-128</scope>
    <source>
        <tissue>Brain</tissue>
    </source>
</reference>
<reference key="5">
    <citation type="journal article" date="2007" name="BMC Genomics">
        <title>The full-ORF clone resource of the German cDNA consortium.</title>
        <authorList>
            <person name="Bechtel S."/>
            <person name="Rosenfelder H."/>
            <person name="Duda A."/>
            <person name="Schmidt C.P."/>
            <person name="Ernst U."/>
            <person name="Wellenreuther R."/>
            <person name="Mehrle A."/>
            <person name="Schuster C."/>
            <person name="Bahr A."/>
            <person name="Bloecker H."/>
            <person name="Heubner D."/>
            <person name="Hoerlein A."/>
            <person name="Michel G."/>
            <person name="Wedler H."/>
            <person name="Koehrer K."/>
            <person name="Ottenwaelder B."/>
            <person name="Poustka A."/>
            <person name="Wiemann S."/>
            <person name="Schupp I."/>
        </authorList>
    </citation>
    <scope>NUCLEOTIDE SEQUENCE [LARGE SCALE MRNA] OF 87-727 (ISOFORM 1)</scope>
    <scope>VARIANT VAL-128</scope>
    <source>
        <tissue>Testis</tissue>
    </source>
</reference>
<dbReference type="EMBL" id="AB023174">
    <property type="protein sequence ID" value="BAA76801.2"/>
    <property type="status" value="ALT_INIT"/>
    <property type="molecule type" value="mRNA"/>
</dbReference>
<dbReference type="EMBL" id="AK096867">
    <property type="protein sequence ID" value="BAG53385.1"/>
    <property type="molecule type" value="mRNA"/>
</dbReference>
<dbReference type="EMBL" id="AL096678">
    <property type="status" value="NOT_ANNOTATED_CDS"/>
    <property type="molecule type" value="Genomic_DNA"/>
</dbReference>
<dbReference type="EMBL" id="AL159174">
    <property type="status" value="NOT_ANNOTATED_CDS"/>
    <property type="molecule type" value="Genomic_DNA"/>
</dbReference>
<dbReference type="EMBL" id="AL136971">
    <property type="status" value="NOT_ANNOTATED_CDS"/>
    <property type="molecule type" value="Genomic_DNA"/>
</dbReference>
<dbReference type="EMBL" id="AL138717">
    <property type="status" value="NOT_ANNOTATED_CDS"/>
    <property type="molecule type" value="Genomic_DNA"/>
</dbReference>
<dbReference type="EMBL" id="BC042173">
    <property type="protein sequence ID" value="AAH42173.1"/>
    <property type="molecule type" value="mRNA"/>
</dbReference>
<dbReference type="EMBL" id="AL117504">
    <property type="protein sequence ID" value="CAB55968.1"/>
    <property type="molecule type" value="mRNA"/>
</dbReference>
<dbReference type="CCDS" id="CCDS47460.1">
    <molecule id="Q9Y2G4-3"/>
</dbReference>
<dbReference type="CCDS" id="CCDS56441.1">
    <molecule id="Q9Y2G4-2"/>
</dbReference>
<dbReference type="CCDS" id="CCDS56442.1">
    <molecule id="Q9Y2G4-1"/>
</dbReference>
<dbReference type="CCDS" id="CCDS56443.1">
    <molecule id="Q9Y2G4-4"/>
</dbReference>
<dbReference type="RefSeq" id="NP_001229738.1">
    <molecule id="Q9Y2G4-2"/>
    <property type="nucleotide sequence ID" value="NM_001242809.2"/>
</dbReference>
<dbReference type="RefSeq" id="NP_001229740.1">
    <molecule id="Q9Y2G4-2"/>
    <property type="nucleotide sequence ID" value="NM_001242811.1"/>
</dbReference>
<dbReference type="RefSeq" id="NP_001229742.1">
    <molecule id="Q9Y2G4-1"/>
    <property type="nucleotide sequence ID" value="NM_001242813.1"/>
</dbReference>
<dbReference type="RefSeq" id="NP_001229743.1">
    <molecule id="Q9Y2G4-4"/>
    <property type="nucleotide sequence ID" value="NM_001242814.1"/>
</dbReference>
<dbReference type="RefSeq" id="NP_055757.3">
    <molecule id="Q9Y2G4-3"/>
    <property type="nucleotide sequence ID" value="NM_014942.4"/>
</dbReference>
<dbReference type="RefSeq" id="XP_005248738.1">
    <molecule id="Q9Y2G4-2"/>
    <property type="nucleotide sequence ID" value="XM_005248681.3"/>
</dbReference>
<dbReference type="RefSeq" id="XP_011533902.1">
    <property type="nucleotide sequence ID" value="XM_011535600.2"/>
</dbReference>
<dbReference type="RefSeq" id="XP_024302125.1">
    <molecule id="Q9Y2G4-3"/>
    <property type="nucleotide sequence ID" value="XM_024446357.2"/>
</dbReference>
<dbReference type="RefSeq" id="XP_024302127.1">
    <molecule id="Q9Y2G4-1"/>
    <property type="nucleotide sequence ID" value="XM_024446359.2"/>
</dbReference>
<dbReference type="RefSeq" id="XP_047274354.1">
    <molecule id="Q9Y2G4-3"/>
    <property type="nucleotide sequence ID" value="XM_047418398.1"/>
</dbReference>
<dbReference type="RefSeq" id="XP_047274360.1">
    <molecule id="Q9Y2G4-4"/>
    <property type="nucleotide sequence ID" value="XM_047418404.1"/>
</dbReference>
<dbReference type="RefSeq" id="XP_054210682.1">
    <molecule id="Q9Y2G4-4"/>
    <property type="nucleotide sequence ID" value="XM_054354707.1"/>
</dbReference>
<dbReference type="SMR" id="Q9Y2G4"/>
<dbReference type="BioGRID" id="116548">
    <property type="interactions" value="7"/>
</dbReference>
<dbReference type="DIP" id="DIP-39375N"/>
<dbReference type="FunCoup" id="Q9Y2G4">
    <property type="interactions" value="2124"/>
</dbReference>
<dbReference type="IntAct" id="Q9Y2G4">
    <property type="interactions" value="4"/>
</dbReference>
<dbReference type="STRING" id="9606.ENSP00000345767"/>
<dbReference type="GlyGen" id="Q9Y2G4">
    <property type="glycosylation" value="1 site, 1 O-linked glycan (1 site)"/>
</dbReference>
<dbReference type="iPTMnet" id="Q9Y2G4"/>
<dbReference type="PhosphoSitePlus" id="Q9Y2G4"/>
<dbReference type="BioMuta" id="ANKRD6"/>
<dbReference type="DMDM" id="327478595"/>
<dbReference type="jPOST" id="Q9Y2G4"/>
<dbReference type="MassIVE" id="Q9Y2G4"/>
<dbReference type="PaxDb" id="9606-ENSP00000430985"/>
<dbReference type="PeptideAtlas" id="Q9Y2G4"/>
<dbReference type="ProteomicsDB" id="85765">
    <molecule id="Q9Y2G4-2"/>
</dbReference>
<dbReference type="ProteomicsDB" id="85766">
    <molecule id="Q9Y2G4-1"/>
</dbReference>
<dbReference type="ProteomicsDB" id="85767">
    <molecule id="Q9Y2G4-3"/>
</dbReference>
<dbReference type="ProteomicsDB" id="85768">
    <molecule id="Q9Y2G4-4"/>
</dbReference>
<dbReference type="Antibodypedia" id="54806">
    <property type="antibodies" value="98 antibodies from 18 providers"/>
</dbReference>
<dbReference type="DNASU" id="22881"/>
<dbReference type="Ensembl" id="ENST00000339746.9">
    <molecule id="Q9Y2G4-2"/>
    <property type="protein sequence ID" value="ENSP00000345767.4"/>
    <property type="gene ID" value="ENSG00000135299.18"/>
</dbReference>
<dbReference type="Ensembl" id="ENST00000369408.9">
    <molecule id="Q9Y2G4-1"/>
    <property type="protein sequence ID" value="ENSP00000358416.5"/>
    <property type="gene ID" value="ENSG00000135299.18"/>
</dbReference>
<dbReference type="Ensembl" id="ENST00000447838.6">
    <molecule id="Q9Y2G4-3"/>
    <property type="protein sequence ID" value="ENSP00000396771.2"/>
    <property type="gene ID" value="ENSG00000135299.18"/>
</dbReference>
<dbReference type="Ensembl" id="ENST00000520793.5">
    <molecule id="Q9Y2G4-4"/>
    <property type="protein sequence ID" value="ENSP00000429782.1"/>
    <property type="gene ID" value="ENSG00000135299.18"/>
</dbReference>
<dbReference type="Ensembl" id="ENST00000522441.5">
    <molecule id="Q9Y2G4-2"/>
    <property type="protein sequence ID" value="ENSP00000430985.1"/>
    <property type="gene ID" value="ENSG00000135299.18"/>
</dbReference>
<dbReference type="GeneID" id="22881"/>
<dbReference type="KEGG" id="hsa:22881"/>
<dbReference type="MANE-Select" id="ENST00000339746.9">
    <property type="protein sequence ID" value="ENSP00000345767.4"/>
    <property type="RefSeq nucleotide sequence ID" value="NM_001242809.2"/>
    <property type="RefSeq protein sequence ID" value="NP_001229738.1"/>
</dbReference>
<dbReference type="UCSC" id="uc003pne.5">
    <molecule id="Q9Y2G4-2"/>
    <property type="organism name" value="human"/>
</dbReference>
<dbReference type="AGR" id="HGNC:17280"/>
<dbReference type="CTD" id="22881"/>
<dbReference type="DisGeNET" id="22881"/>
<dbReference type="GeneCards" id="ANKRD6"/>
<dbReference type="HGNC" id="HGNC:17280">
    <property type="gene designation" value="ANKRD6"/>
</dbReference>
<dbReference type="HPA" id="ENSG00000135299">
    <property type="expression patterns" value="Tissue enhanced (brain)"/>
</dbReference>
<dbReference type="MIM" id="610583">
    <property type="type" value="gene"/>
</dbReference>
<dbReference type="neXtProt" id="NX_Q9Y2G4"/>
<dbReference type="OpenTargets" id="ENSG00000135299"/>
<dbReference type="PharmGKB" id="PA24807"/>
<dbReference type="VEuPathDB" id="HostDB:ENSG00000135299"/>
<dbReference type="eggNOG" id="KOG0504">
    <property type="taxonomic scope" value="Eukaryota"/>
</dbReference>
<dbReference type="GeneTree" id="ENSGT00940000155887"/>
<dbReference type="HOGENOM" id="CLU_027072_0_0_1"/>
<dbReference type="InParanoid" id="Q9Y2G4"/>
<dbReference type="OrthoDB" id="424503at2759"/>
<dbReference type="PAN-GO" id="Q9Y2G4">
    <property type="GO annotations" value="4 GO annotations based on evolutionary models"/>
</dbReference>
<dbReference type="PhylomeDB" id="Q9Y2G4"/>
<dbReference type="TreeFam" id="TF332587"/>
<dbReference type="PathwayCommons" id="Q9Y2G4"/>
<dbReference type="SignaLink" id="Q9Y2G4"/>
<dbReference type="SIGNOR" id="Q9Y2G4"/>
<dbReference type="BioGRID-ORCS" id="22881">
    <property type="hits" value="7 hits in 1150 CRISPR screens"/>
</dbReference>
<dbReference type="ChiTaRS" id="ANKRD6">
    <property type="organism name" value="human"/>
</dbReference>
<dbReference type="GenomeRNAi" id="22881"/>
<dbReference type="Pharos" id="Q9Y2G4">
    <property type="development level" value="Tbio"/>
</dbReference>
<dbReference type="PRO" id="PR:Q9Y2G4"/>
<dbReference type="Proteomes" id="UP000005640">
    <property type="component" value="Chromosome 6"/>
</dbReference>
<dbReference type="RNAct" id="Q9Y2G4">
    <property type="molecule type" value="protein"/>
</dbReference>
<dbReference type="Bgee" id="ENSG00000135299">
    <property type="expression patterns" value="Expressed in blood vessel layer and 192 other cell types or tissues"/>
</dbReference>
<dbReference type="ExpressionAtlas" id="Q9Y2G4">
    <property type="expression patterns" value="baseline and differential"/>
</dbReference>
<dbReference type="GO" id="GO:0005737">
    <property type="term" value="C:cytoplasm"/>
    <property type="evidence" value="ECO:0007669"/>
    <property type="project" value="Ensembl"/>
</dbReference>
<dbReference type="GO" id="GO:0043231">
    <property type="term" value="C:intracellular membrane-bounded organelle"/>
    <property type="evidence" value="ECO:0000314"/>
    <property type="project" value="HPA"/>
</dbReference>
<dbReference type="GO" id="GO:0005634">
    <property type="term" value="C:nucleus"/>
    <property type="evidence" value="ECO:0000318"/>
    <property type="project" value="GO_Central"/>
</dbReference>
<dbReference type="GO" id="GO:0030941">
    <property type="term" value="F:chloroplast targeting sequence binding"/>
    <property type="evidence" value="ECO:0000318"/>
    <property type="project" value="GO_Central"/>
</dbReference>
<dbReference type="GO" id="GO:0090090">
    <property type="term" value="P:negative regulation of canonical Wnt signaling pathway"/>
    <property type="evidence" value="ECO:0000318"/>
    <property type="project" value="GO_Central"/>
</dbReference>
<dbReference type="GO" id="GO:0046330">
    <property type="term" value="P:positive regulation of JNK cascade"/>
    <property type="evidence" value="ECO:0000318"/>
    <property type="project" value="GO_Central"/>
</dbReference>
<dbReference type="GO" id="GO:2000096">
    <property type="term" value="P:positive regulation of Wnt signaling pathway, planar cell polarity pathway"/>
    <property type="evidence" value="ECO:0007669"/>
    <property type="project" value="Ensembl"/>
</dbReference>
<dbReference type="GO" id="GO:0045036">
    <property type="term" value="P:protein targeting to chloroplast"/>
    <property type="evidence" value="ECO:0000318"/>
    <property type="project" value="GO_Central"/>
</dbReference>
<dbReference type="FunFam" id="1.25.40.20:FF:000293">
    <property type="entry name" value="Ankyrin repeat domain-containing protein 6"/>
    <property type="match status" value="1"/>
</dbReference>
<dbReference type="FunFam" id="1.25.40.20:FF:000370">
    <property type="entry name" value="Ankyrin repeat domain-containing protein 6"/>
    <property type="match status" value="1"/>
</dbReference>
<dbReference type="FunFam" id="1.25.40.20:FF:000357">
    <property type="entry name" value="ankyrin repeat domain-containing protein 6 isoform X1"/>
    <property type="match status" value="1"/>
</dbReference>
<dbReference type="Gene3D" id="1.25.40.20">
    <property type="entry name" value="Ankyrin repeat-containing domain"/>
    <property type="match status" value="4"/>
</dbReference>
<dbReference type="InterPro" id="IPR002110">
    <property type="entry name" value="Ankyrin_rpt"/>
</dbReference>
<dbReference type="InterPro" id="IPR036770">
    <property type="entry name" value="Ankyrin_rpt-contain_sf"/>
</dbReference>
<dbReference type="PANTHER" id="PTHR24126:SF14">
    <property type="entry name" value="ANK_REP_REGION DOMAIN-CONTAINING PROTEIN"/>
    <property type="match status" value="1"/>
</dbReference>
<dbReference type="PANTHER" id="PTHR24126">
    <property type="entry name" value="ANKYRIN REPEAT, PH AND SEC7 DOMAIN CONTAINING PROTEIN SECG-RELATED"/>
    <property type="match status" value="1"/>
</dbReference>
<dbReference type="Pfam" id="PF00023">
    <property type="entry name" value="Ank"/>
    <property type="match status" value="1"/>
</dbReference>
<dbReference type="Pfam" id="PF12796">
    <property type="entry name" value="Ank_2"/>
    <property type="match status" value="2"/>
</dbReference>
<dbReference type="Pfam" id="PF13637">
    <property type="entry name" value="Ank_4"/>
    <property type="match status" value="1"/>
</dbReference>
<dbReference type="PRINTS" id="PR01415">
    <property type="entry name" value="ANKYRIN"/>
</dbReference>
<dbReference type="SMART" id="SM00248">
    <property type="entry name" value="ANK"/>
    <property type="match status" value="8"/>
</dbReference>
<dbReference type="SUPFAM" id="SSF48403">
    <property type="entry name" value="Ankyrin repeat"/>
    <property type="match status" value="1"/>
</dbReference>
<dbReference type="PROSITE" id="PS50297">
    <property type="entry name" value="ANK_REP_REGION"/>
    <property type="match status" value="1"/>
</dbReference>
<dbReference type="PROSITE" id="PS50088">
    <property type="entry name" value="ANK_REPEAT"/>
    <property type="match status" value="6"/>
</dbReference>
<organism>
    <name type="scientific">Homo sapiens</name>
    <name type="common">Human</name>
    <dbReference type="NCBI Taxonomy" id="9606"/>
    <lineage>
        <taxon>Eukaryota</taxon>
        <taxon>Metazoa</taxon>
        <taxon>Chordata</taxon>
        <taxon>Craniata</taxon>
        <taxon>Vertebrata</taxon>
        <taxon>Euteleostomi</taxon>
        <taxon>Mammalia</taxon>
        <taxon>Eutheria</taxon>
        <taxon>Euarchontoglires</taxon>
        <taxon>Primates</taxon>
        <taxon>Haplorrhini</taxon>
        <taxon>Catarrhini</taxon>
        <taxon>Hominidae</taxon>
        <taxon>Homo</taxon>
    </lineage>
</organism>
<proteinExistence type="evidence at protein level"/>